<feature type="chain" id="PRO_0000151188" description="Undecaprenyl-diphosphatase">
    <location>
        <begin position="1"/>
        <end position="257"/>
    </location>
</feature>
<feature type="transmembrane region" description="Helical" evidence="1">
    <location>
        <begin position="4"/>
        <end position="24"/>
    </location>
</feature>
<feature type="transmembrane region" description="Helical" evidence="1">
    <location>
        <begin position="41"/>
        <end position="61"/>
    </location>
</feature>
<feature type="transmembrane region" description="Helical" evidence="1">
    <location>
        <begin position="74"/>
        <end position="94"/>
    </location>
</feature>
<feature type="transmembrane region" description="Helical" evidence="1">
    <location>
        <begin position="103"/>
        <end position="123"/>
    </location>
</feature>
<feature type="transmembrane region" description="Helical" evidence="1">
    <location>
        <begin position="133"/>
        <end position="153"/>
    </location>
</feature>
<feature type="transmembrane region" description="Helical" evidence="1">
    <location>
        <begin position="173"/>
        <end position="193"/>
    </location>
</feature>
<feature type="transmembrane region" description="Helical" evidence="1">
    <location>
        <begin position="209"/>
        <end position="229"/>
    </location>
</feature>
<feature type="transmembrane region" description="Helical" evidence="1">
    <location>
        <begin position="236"/>
        <end position="256"/>
    </location>
</feature>
<name>UPPP_RHOBA</name>
<proteinExistence type="inferred from homology"/>
<keyword id="KW-0046">Antibiotic resistance</keyword>
<keyword id="KW-0997">Cell inner membrane</keyword>
<keyword id="KW-1003">Cell membrane</keyword>
<keyword id="KW-0133">Cell shape</keyword>
<keyword id="KW-0961">Cell wall biogenesis/degradation</keyword>
<keyword id="KW-0378">Hydrolase</keyword>
<keyword id="KW-0472">Membrane</keyword>
<keyword id="KW-0573">Peptidoglycan synthesis</keyword>
<keyword id="KW-1185">Reference proteome</keyword>
<keyword id="KW-0812">Transmembrane</keyword>
<keyword id="KW-1133">Transmembrane helix</keyword>
<evidence type="ECO:0000255" key="1">
    <source>
        <dbReference type="HAMAP-Rule" id="MF_01006"/>
    </source>
</evidence>
<comment type="function">
    <text evidence="1">Catalyzes the dephosphorylation of undecaprenyl diphosphate (UPP). Confers resistance to bacitracin.</text>
</comment>
<comment type="catalytic activity">
    <reaction evidence="1">
        <text>di-trans,octa-cis-undecaprenyl diphosphate + H2O = di-trans,octa-cis-undecaprenyl phosphate + phosphate + H(+)</text>
        <dbReference type="Rhea" id="RHEA:28094"/>
        <dbReference type="ChEBI" id="CHEBI:15377"/>
        <dbReference type="ChEBI" id="CHEBI:15378"/>
        <dbReference type="ChEBI" id="CHEBI:43474"/>
        <dbReference type="ChEBI" id="CHEBI:58405"/>
        <dbReference type="ChEBI" id="CHEBI:60392"/>
        <dbReference type="EC" id="3.6.1.27"/>
    </reaction>
</comment>
<comment type="subcellular location">
    <subcellularLocation>
        <location evidence="1">Cell inner membrane</location>
        <topology evidence="1">Multi-pass membrane protein</topology>
    </subcellularLocation>
</comment>
<comment type="miscellaneous">
    <text>Bacitracin is thought to be involved in the inhibition of peptidoglycan synthesis by sequestering undecaprenyl diphosphate, thereby reducing the pool of lipid carrier available.</text>
</comment>
<comment type="similarity">
    <text evidence="1">Belongs to the UppP family.</text>
</comment>
<protein>
    <recommendedName>
        <fullName evidence="1">Undecaprenyl-diphosphatase</fullName>
        <ecNumber evidence="1">3.6.1.27</ecNumber>
    </recommendedName>
    <alternativeName>
        <fullName evidence="1">Bacitracin resistance protein</fullName>
    </alternativeName>
    <alternativeName>
        <fullName evidence="1">Undecaprenyl pyrophosphate phosphatase</fullName>
    </alternativeName>
</protein>
<reference key="1">
    <citation type="journal article" date="2003" name="Proc. Natl. Acad. Sci. U.S.A.">
        <title>Complete genome sequence of the marine planctomycete Pirellula sp. strain 1.</title>
        <authorList>
            <person name="Gloeckner F.O."/>
            <person name="Kube M."/>
            <person name="Bauer M."/>
            <person name="Teeling H."/>
            <person name="Lombardot T."/>
            <person name="Ludwig W."/>
            <person name="Gade D."/>
            <person name="Beck A."/>
            <person name="Borzym K."/>
            <person name="Heitmann K."/>
            <person name="Rabus R."/>
            <person name="Schlesner H."/>
            <person name="Amann R."/>
            <person name="Reinhardt R."/>
        </authorList>
    </citation>
    <scope>NUCLEOTIDE SEQUENCE [LARGE SCALE GENOMIC DNA]</scope>
    <source>
        <strain>DSM 10527 / NCIMB 13988 / SH1</strain>
    </source>
</reference>
<organism>
    <name type="scientific">Rhodopirellula baltica (strain DSM 10527 / NCIMB 13988 / SH1)</name>
    <dbReference type="NCBI Taxonomy" id="243090"/>
    <lineage>
        <taxon>Bacteria</taxon>
        <taxon>Pseudomonadati</taxon>
        <taxon>Planctomycetota</taxon>
        <taxon>Planctomycetia</taxon>
        <taxon>Pirellulales</taxon>
        <taxon>Pirellulaceae</taxon>
        <taxon>Rhodopirellula</taxon>
    </lineage>
</organism>
<dbReference type="EC" id="3.6.1.27" evidence="1"/>
<dbReference type="EMBL" id="BX294146">
    <property type="protein sequence ID" value="CAD75360.1"/>
    <property type="molecule type" value="Genomic_DNA"/>
</dbReference>
<dbReference type="RefSeq" id="NP_867813.1">
    <property type="nucleotide sequence ID" value="NC_005027.1"/>
</dbReference>
<dbReference type="RefSeq" id="WP_011121390.1">
    <property type="nucleotide sequence ID" value="NC_005027.1"/>
</dbReference>
<dbReference type="SMR" id="Q7UNQ8"/>
<dbReference type="FunCoup" id="Q7UNQ8">
    <property type="interactions" value="258"/>
</dbReference>
<dbReference type="STRING" id="243090.RB7435"/>
<dbReference type="EnsemblBacteria" id="CAD75360">
    <property type="protein sequence ID" value="CAD75360"/>
    <property type="gene ID" value="RB7435"/>
</dbReference>
<dbReference type="KEGG" id="rba:RB7435"/>
<dbReference type="PATRIC" id="fig|243090.15.peg.3587"/>
<dbReference type="eggNOG" id="COG1968">
    <property type="taxonomic scope" value="Bacteria"/>
</dbReference>
<dbReference type="HOGENOM" id="CLU_060296_2_0_0"/>
<dbReference type="InParanoid" id="Q7UNQ8"/>
<dbReference type="OrthoDB" id="9808289at2"/>
<dbReference type="Proteomes" id="UP000001025">
    <property type="component" value="Chromosome"/>
</dbReference>
<dbReference type="GO" id="GO:0005886">
    <property type="term" value="C:plasma membrane"/>
    <property type="evidence" value="ECO:0000318"/>
    <property type="project" value="GO_Central"/>
</dbReference>
<dbReference type="GO" id="GO:0050380">
    <property type="term" value="F:undecaprenyl-diphosphatase activity"/>
    <property type="evidence" value="ECO:0000318"/>
    <property type="project" value="GO_Central"/>
</dbReference>
<dbReference type="GO" id="GO:0071555">
    <property type="term" value="P:cell wall organization"/>
    <property type="evidence" value="ECO:0007669"/>
    <property type="project" value="UniProtKB-KW"/>
</dbReference>
<dbReference type="GO" id="GO:0009252">
    <property type="term" value="P:peptidoglycan biosynthetic process"/>
    <property type="evidence" value="ECO:0007669"/>
    <property type="project" value="UniProtKB-KW"/>
</dbReference>
<dbReference type="GO" id="GO:0000270">
    <property type="term" value="P:peptidoglycan metabolic process"/>
    <property type="evidence" value="ECO:0000318"/>
    <property type="project" value="GO_Central"/>
</dbReference>
<dbReference type="GO" id="GO:0008360">
    <property type="term" value="P:regulation of cell shape"/>
    <property type="evidence" value="ECO:0007669"/>
    <property type="project" value="UniProtKB-KW"/>
</dbReference>
<dbReference type="GO" id="GO:0046677">
    <property type="term" value="P:response to antibiotic"/>
    <property type="evidence" value="ECO:0007669"/>
    <property type="project" value="UniProtKB-UniRule"/>
</dbReference>
<dbReference type="HAMAP" id="MF_01006">
    <property type="entry name" value="Undec_diphosphatase"/>
    <property type="match status" value="1"/>
</dbReference>
<dbReference type="InterPro" id="IPR003824">
    <property type="entry name" value="UppP"/>
</dbReference>
<dbReference type="PANTHER" id="PTHR30622">
    <property type="entry name" value="UNDECAPRENYL-DIPHOSPHATASE"/>
    <property type="match status" value="1"/>
</dbReference>
<dbReference type="PANTHER" id="PTHR30622:SF4">
    <property type="entry name" value="UNDECAPRENYL-DIPHOSPHATASE"/>
    <property type="match status" value="1"/>
</dbReference>
<dbReference type="Pfam" id="PF02673">
    <property type="entry name" value="BacA"/>
    <property type="match status" value="1"/>
</dbReference>
<accession>Q7UNQ8</accession>
<gene>
    <name evidence="1" type="primary">uppP</name>
    <name type="synonym">bacA</name>
    <name type="synonym">upk</name>
    <name type="ordered locus">RB7435</name>
</gene>
<sequence length="257" mass="27487">MQELIRVVILAIVQGIAEFLPISSSGHLVILGSMLGELGESVTLEIILHAGTLGSILVVFWQRIWALLLKDRRVIGLLVIGTLPAVVIGLTIKTQFPEILRSPLLAGAMLIVTGVMLIVLGRLTPKSGTYDRLGLGAAFLVGCFQAFAILPGISRSGSTILGGRLMGLDRDDSVTFSFLLAIPAILGATVLAIKDLLEDGSSGETSIEVLSIGAAVAFAVGIVALKWLIRWSREDRLHWFAYWCIPAGLLVVLLNLR</sequence>